<dbReference type="EMBL" id="AJ233397">
    <property type="protein sequence ID" value="CAB51048.1"/>
    <property type="molecule type" value="Genomic_DNA"/>
</dbReference>
<dbReference type="SMR" id="Q9WWW5"/>
<dbReference type="UniPathway" id="UPA00191"/>
<dbReference type="GO" id="GO:0005737">
    <property type="term" value="C:cytoplasm"/>
    <property type="evidence" value="ECO:0007669"/>
    <property type="project" value="UniProtKB-SubCell"/>
</dbReference>
<dbReference type="GO" id="GO:0009055">
    <property type="term" value="F:electron transfer activity"/>
    <property type="evidence" value="ECO:0007669"/>
    <property type="project" value="TreeGrafter"/>
</dbReference>
<dbReference type="GO" id="GO:0005506">
    <property type="term" value="F:iron ion binding"/>
    <property type="evidence" value="ECO:0007669"/>
    <property type="project" value="InterPro"/>
</dbReference>
<dbReference type="GO" id="GO:0043448">
    <property type="term" value="P:alkane catabolic process"/>
    <property type="evidence" value="ECO:0007669"/>
    <property type="project" value="UniProtKB-UniPathway"/>
</dbReference>
<dbReference type="CDD" id="cd00730">
    <property type="entry name" value="rubredoxin"/>
    <property type="match status" value="1"/>
</dbReference>
<dbReference type="Gene3D" id="2.20.28.10">
    <property type="match status" value="1"/>
</dbReference>
<dbReference type="InterPro" id="IPR024934">
    <property type="entry name" value="Rubredoxin-like_dom"/>
</dbReference>
<dbReference type="InterPro" id="IPR024935">
    <property type="entry name" value="Rubredoxin_dom"/>
</dbReference>
<dbReference type="InterPro" id="IPR050526">
    <property type="entry name" value="Rubredoxin_ET"/>
</dbReference>
<dbReference type="InterPro" id="IPR018527">
    <property type="entry name" value="Rubredoxin_Fe_BS"/>
</dbReference>
<dbReference type="PANTHER" id="PTHR47627">
    <property type="entry name" value="RUBREDOXIN"/>
    <property type="match status" value="1"/>
</dbReference>
<dbReference type="PANTHER" id="PTHR47627:SF1">
    <property type="entry name" value="RUBREDOXIN-1-RELATED"/>
    <property type="match status" value="1"/>
</dbReference>
<dbReference type="Pfam" id="PF00301">
    <property type="entry name" value="Rubredoxin"/>
    <property type="match status" value="1"/>
</dbReference>
<dbReference type="PRINTS" id="PR00163">
    <property type="entry name" value="RUBREDOXIN"/>
</dbReference>
<dbReference type="SUPFAM" id="SSF57802">
    <property type="entry name" value="Rubredoxin-like"/>
    <property type="match status" value="1"/>
</dbReference>
<dbReference type="PROSITE" id="PS00202">
    <property type="entry name" value="RUBREDOXIN"/>
    <property type="match status" value="1"/>
</dbReference>
<dbReference type="PROSITE" id="PS50903">
    <property type="entry name" value="RUBREDOXIN_LIKE"/>
    <property type="match status" value="1"/>
</dbReference>
<accession>Q9WWW5</accession>
<name>RUBR2_PSEPU</name>
<feature type="chain" id="PRO_0000392234" description="Rubredoxin-2">
    <location>
        <begin position="1"/>
        <end position="134"/>
    </location>
</feature>
<feature type="domain" description="Rubredoxin-like" evidence="2">
    <location>
        <begin position="1"/>
        <end position="53"/>
    </location>
</feature>
<feature type="region of interest" description="Disordered" evidence="3">
    <location>
        <begin position="99"/>
        <end position="134"/>
    </location>
</feature>
<feature type="compositionally biased region" description="Basic and acidic residues" evidence="3">
    <location>
        <begin position="99"/>
        <end position="116"/>
    </location>
</feature>
<feature type="compositionally biased region" description="Basic residues" evidence="3">
    <location>
        <begin position="124"/>
        <end position="134"/>
    </location>
</feature>
<feature type="binding site" evidence="2">
    <location>
        <position position="6"/>
    </location>
    <ligand>
        <name>Fe cation</name>
        <dbReference type="ChEBI" id="CHEBI:24875"/>
    </ligand>
</feature>
<feature type="binding site" evidence="2">
    <location>
        <position position="9"/>
    </location>
    <ligand>
        <name>Fe cation</name>
        <dbReference type="ChEBI" id="CHEBI:24875"/>
    </ligand>
</feature>
<feature type="binding site" evidence="2">
    <location>
        <position position="39"/>
    </location>
    <ligand>
        <name>Fe cation</name>
        <dbReference type="ChEBI" id="CHEBI:24875"/>
    </ligand>
</feature>
<feature type="binding site" evidence="2">
    <location>
        <position position="42"/>
    </location>
    <ligand>
        <name>Fe cation</name>
        <dbReference type="ChEBI" id="CHEBI:24875"/>
    </ligand>
</feature>
<gene>
    <name type="primary">alkF</name>
</gene>
<comment type="function">
    <text evidence="1">Involved in the hydrocarbon hydroxylating system, which transfers electrons from NADH to rubredoxin reductase and then through rubredoxin to alkane 1 monooxygenase.</text>
</comment>
<comment type="cofactor">
    <cofactor evidence="1">
        <name>Fe(3+)</name>
        <dbReference type="ChEBI" id="CHEBI:29034"/>
    </cofactor>
    <text evidence="1">Binds 1 Fe(3+) ions per subunit.</text>
</comment>
<comment type="pathway">
    <text>Hydrocarbon metabolism; alkane degradation.</text>
</comment>
<comment type="subcellular location">
    <subcellularLocation>
        <location evidence="1">Cytoplasm</location>
    </subcellularLocation>
</comment>
<comment type="similarity">
    <text evidence="4">Belongs to the rubredoxin family.</text>
</comment>
<evidence type="ECO:0000250" key="1"/>
<evidence type="ECO:0000255" key="2">
    <source>
        <dbReference type="PROSITE-ProRule" id="PRU00241"/>
    </source>
</evidence>
<evidence type="ECO:0000256" key="3">
    <source>
        <dbReference type="SAM" id="MobiDB-lite"/>
    </source>
</evidence>
<evidence type="ECO:0000305" key="4"/>
<protein>
    <recommendedName>
        <fullName>Rubredoxin-2</fullName>
        <shortName>Rdxs</shortName>
    </recommendedName>
</protein>
<proteinExistence type="inferred from homology"/>
<reference key="1">
    <citation type="journal article" date="1999" name="Environ. Microbiol.">
        <title>Molecular screening for alkane hydroxylase genes in Gram-negative and Gram-positive strains.</title>
        <authorList>
            <person name="Smits T.H.M."/>
            <person name="Roethlisberger M."/>
            <person name="Witholt B."/>
            <person name="Van Beilen J.B."/>
        </authorList>
    </citation>
    <scope>NUCLEOTIDE SEQUENCE [GENOMIC DNA]</scope>
    <source>
        <strain>P1</strain>
    </source>
</reference>
<reference key="2">
    <citation type="journal article" date="2001" name="Microbiology">
        <title>Analysis of Pseudomonas putida alkane degradation gene clusters and flanking insertion sequences: evolution and regulation of the alk-genes.</title>
        <authorList>
            <person name="Van Beilen J.B."/>
            <person name="Panke S."/>
            <person name="Lucchini S."/>
            <person name="Franchini A.G."/>
            <person name="Roethlisberger M."/>
            <person name="Witholt B."/>
        </authorList>
    </citation>
    <scope>NUCLEOTIDE SEQUENCE [GENOMIC DNA]</scope>
    <source>
        <strain>P1</strain>
    </source>
</reference>
<sequence length="134" mass="15534">MAKYQCPDCQYIYDECKGEPHEGFQPNTNWGEIPEEWACPDCAVRDKIDFKMLADPRCEITQLKQNDPVIKQDNNIIEDTLSEPSILSAELEFTAEKISITDERENTPDNKVERRSQSQAVRRSSVKKIKNNKR</sequence>
<organism>
    <name type="scientific">Pseudomonas putida</name>
    <name type="common">Arthrobacter siderocapsulatus</name>
    <dbReference type="NCBI Taxonomy" id="303"/>
    <lineage>
        <taxon>Bacteria</taxon>
        <taxon>Pseudomonadati</taxon>
        <taxon>Pseudomonadota</taxon>
        <taxon>Gammaproteobacteria</taxon>
        <taxon>Pseudomonadales</taxon>
        <taxon>Pseudomonadaceae</taxon>
        <taxon>Pseudomonas</taxon>
    </lineage>
</organism>
<keyword id="KW-0963">Cytoplasm</keyword>
<keyword id="KW-0249">Electron transport</keyword>
<keyword id="KW-0408">Iron</keyword>
<keyword id="KW-0479">Metal-binding</keyword>
<keyword id="KW-0813">Transport</keyword>